<dbReference type="EMBL" id="X15765">
    <property type="protein sequence ID" value="CAA33771.1"/>
    <property type="status" value="ALT_SEQ"/>
    <property type="molecule type" value="Genomic_DNA"/>
</dbReference>
<dbReference type="SMR" id="P60115"/>
<dbReference type="GO" id="GO:0031966">
    <property type="term" value="C:mitochondrial membrane"/>
    <property type="evidence" value="ECO:0007669"/>
    <property type="project" value="UniProtKB-SubCell"/>
</dbReference>
<dbReference type="GO" id="GO:0045259">
    <property type="term" value="C:proton-transporting ATP synthase complex"/>
    <property type="evidence" value="ECO:0007669"/>
    <property type="project" value="UniProtKB-KW"/>
</dbReference>
<dbReference type="GO" id="GO:0033177">
    <property type="term" value="C:proton-transporting two-sector ATPase complex, proton-transporting domain"/>
    <property type="evidence" value="ECO:0007669"/>
    <property type="project" value="InterPro"/>
</dbReference>
<dbReference type="GO" id="GO:0005524">
    <property type="term" value="F:ATP binding"/>
    <property type="evidence" value="ECO:0007669"/>
    <property type="project" value="UniProtKB-KW"/>
</dbReference>
<dbReference type="GO" id="GO:0008289">
    <property type="term" value="F:lipid binding"/>
    <property type="evidence" value="ECO:0007669"/>
    <property type="project" value="UniProtKB-KW"/>
</dbReference>
<dbReference type="GO" id="GO:0015078">
    <property type="term" value="F:proton transmembrane transporter activity"/>
    <property type="evidence" value="ECO:0007669"/>
    <property type="project" value="InterPro"/>
</dbReference>
<dbReference type="GO" id="GO:0015986">
    <property type="term" value="P:proton motive force-driven ATP synthesis"/>
    <property type="evidence" value="ECO:0007669"/>
    <property type="project" value="InterPro"/>
</dbReference>
<dbReference type="CDD" id="cd18182">
    <property type="entry name" value="ATP-synt_Fo_c_ATP5G3"/>
    <property type="match status" value="1"/>
</dbReference>
<dbReference type="FunFam" id="1.20.20.10:FF:000005">
    <property type="entry name" value="ATP synthase subunit 9, mitochondrial"/>
    <property type="match status" value="1"/>
</dbReference>
<dbReference type="Gene3D" id="1.20.20.10">
    <property type="entry name" value="F1F0 ATP synthase subunit C"/>
    <property type="match status" value="1"/>
</dbReference>
<dbReference type="HAMAP" id="MF_01396">
    <property type="entry name" value="ATP_synth_c_bact"/>
    <property type="match status" value="1"/>
</dbReference>
<dbReference type="InterPro" id="IPR000454">
    <property type="entry name" value="ATP_synth_F0_csu"/>
</dbReference>
<dbReference type="InterPro" id="IPR020537">
    <property type="entry name" value="ATP_synth_F0_csu_DDCD_BS"/>
</dbReference>
<dbReference type="InterPro" id="IPR038662">
    <property type="entry name" value="ATP_synth_F0_csu_sf"/>
</dbReference>
<dbReference type="InterPro" id="IPR002379">
    <property type="entry name" value="ATPase_proteolipid_c-like_dom"/>
</dbReference>
<dbReference type="InterPro" id="IPR035921">
    <property type="entry name" value="F/V-ATP_Csub_sf"/>
</dbReference>
<dbReference type="PANTHER" id="PTHR10031">
    <property type="entry name" value="ATP SYNTHASE LIPID-BINDING PROTEIN, MITOCHONDRIAL"/>
    <property type="match status" value="1"/>
</dbReference>
<dbReference type="PANTHER" id="PTHR10031:SF0">
    <property type="entry name" value="ATPASE PROTEIN 9"/>
    <property type="match status" value="1"/>
</dbReference>
<dbReference type="Pfam" id="PF00137">
    <property type="entry name" value="ATP-synt_C"/>
    <property type="match status" value="1"/>
</dbReference>
<dbReference type="PRINTS" id="PR00124">
    <property type="entry name" value="ATPASEC"/>
</dbReference>
<dbReference type="SUPFAM" id="SSF81333">
    <property type="entry name" value="F1F0 ATP synthase subunit C"/>
    <property type="match status" value="1"/>
</dbReference>
<dbReference type="PROSITE" id="PS00605">
    <property type="entry name" value="ATPASE_C"/>
    <property type="match status" value="1"/>
</dbReference>
<comment type="function">
    <text>This protein is one of the chains of the nonenzymatic membrane component (F0) of mitochondrial ATPase.</text>
</comment>
<comment type="subunit">
    <text>F-type ATPases have 2 components, CF(1) - the catalytic core - and CF(0) - the membrane proton channel. CF(1) has five subunits: alpha(3), beta(3), gamma(1), delta(1), epsilon(1). CF(0) has three main subunits: a, b and c.</text>
</comment>
<comment type="subcellular location">
    <subcellularLocation>
        <location evidence="4">Mitochondrion membrane</location>
        <topology evidence="4">Multi-pass membrane protein</topology>
    </subcellularLocation>
</comment>
<comment type="RNA editing">
    <location>
        <position position="7" evidence="3"/>
    </location>
    <location>
        <position position="10" evidence="3"/>
    </location>
    <location>
        <position position="64" evidence="3"/>
    </location>
    <location>
        <position position="75" evidence="3"/>
    </location>
    <text>The stop codon at position 75 is created by RNA editing.</text>
</comment>
<comment type="similarity">
    <text evidence="4">Belongs to the ATPase C chain family.</text>
</comment>
<organism>
    <name type="scientific">Oenothera biennis</name>
    <name type="common">German evening primrose</name>
    <name type="synonym">Onagra biennis</name>
    <dbReference type="NCBI Taxonomy" id="3942"/>
    <lineage>
        <taxon>Eukaryota</taxon>
        <taxon>Viridiplantae</taxon>
        <taxon>Streptophyta</taxon>
        <taxon>Embryophyta</taxon>
        <taxon>Tracheophyta</taxon>
        <taxon>Spermatophyta</taxon>
        <taxon>Magnoliopsida</taxon>
        <taxon>eudicotyledons</taxon>
        <taxon>Gunneridae</taxon>
        <taxon>Pentapetalae</taxon>
        <taxon>rosids</taxon>
        <taxon>malvids</taxon>
        <taxon>Myrtales</taxon>
        <taxon>Onagraceae</taxon>
        <taxon>Onagroideae</taxon>
        <taxon>Onagreae</taxon>
        <taxon>Oenothera</taxon>
    </lineage>
</organism>
<proteinExistence type="evidence at transcript level"/>
<gene>
    <name type="primary">ATP9</name>
</gene>
<evidence type="ECO:0000250" key="1"/>
<evidence type="ECO:0000255" key="2"/>
<evidence type="ECO:0000269" key="3">
    <source>
    </source>
</evidence>
<evidence type="ECO:0000305" key="4"/>
<name>ATP9_OENBI</name>
<feature type="chain" id="PRO_0000112217" description="ATP synthase subunit 9, mitochondrial">
    <location>
        <begin position="1"/>
        <end position="74"/>
    </location>
</feature>
<feature type="transmembrane region" description="Helical" evidence="2">
    <location>
        <begin position="8"/>
        <end position="28"/>
    </location>
</feature>
<feature type="transmembrane region" description="Helical" evidence="2">
    <location>
        <begin position="50"/>
        <end position="70"/>
    </location>
</feature>
<feature type="site" description="Reversibly protonated during proton transport" evidence="1">
    <location>
        <position position="57"/>
    </location>
</feature>
<keyword id="KW-0067">ATP-binding</keyword>
<keyword id="KW-0138">CF(0)</keyword>
<keyword id="KW-0375">Hydrogen ion transport</keyword>
<keyword id="KW-0406">Ion transport</keyword>
<keyword id="KW-0446">Lipid-binding</keyword>
<keyword id="KW-0472">Membrane</keyword>
<keyword id="KW-0496">Mitochondrion</keyword>
<keyword id="KW-0547">Nucleotide-binding</keyword>
<keyword id="KW-0691">RNA editing</keyword>
<keyword id="KW-0812">Transmembrane</keyword>
<keyword id="KW-1133">Transmembrane helix</keyword>
<keyword id="KW-0813">Transport</keyword>
<geneLocation type="mitochondrion"/>
<accession>P60115</accession>
<accession>P14572</accession>
<sequence>MLEGAKLMGAGAATIALAGAAIGIGNVFSSLIHSVARNPSLAKQLFGYAILGFALTEAIALFALMMAFLILFVF</sequence>
<reference key="1">
    <citation type="journal article" date="1989" name="Curr. Genet.">
        <title>Conserved sequence elements at putative processing sites in plant mitochondria.</title>
        <authorList>
            <person name="Schuster W."/>
            <person name="Brennicke A."/>
        </authorList>
    </citation>
    <scope>NUCLEOTIDE SEQUENCE [GENOMIC DNA]</scope>
</reference>
<reference key="2">
    <citation type="journal article" date="1990" name="FEBS Lett.">
        <title>RNA editing of ATPase subunit 9 transcripts in Oenothera mitochondria.</title>
        <authorList>
            <person name="Schuster W."/>
            <person name="Brennicke A."/>
        </authorList>
    </citation>
    <scope>RNA EDITING</scope>
</reference>
<protein>
    <recommendedName>
        <fullName>ATP synthase subunit 9, mitochondrial</fullName>
    </recommendedName>
    <alternativeName>
        <fullName>Lipid-binding protein</fullName>
    </alternativeName>
</protein>